<accession>P04959</accession>
<protein>
    <recommendedName>
        <fullName>Pectate lyase B</fullName>
        <ecNumber>4.2.2.2</ecNumber>
    </recommendedName>
</protein>
<organism>
    <name type="scientific">Dickeya chrysanthemi</name>
    <name type="common">Pectobacterium chrysanthemi</name>
    <name type="synonym">Erwinia chrysanthemi</name>
    <dbReference type="NCBI Taxonomy" id="556"/>
    <lineage>
        <taxon>Bacteria</taxon>
        <taxon>Pseudomonadati</taxon>
        <taxon>Pseudomonadota</taxon>
        <taxon>Gammaproteobacteria</taxon>
        <taxon>Enterobacterales</taxon>
        <taxon>Pectobacteriaceae</taxon>
        <taxon>Dickeya</taxon>
    </lineage>
</organism>
<comment type="function">
    <text>Involved in maceration and soft-rotting of plant tissue.</text>
</comment>
<comment type="catalytic activity">
    <reaction>
        <text>Eliminative cleavage of (1-&gt;4)-alpha-D-galacturonan to give oligosaccharides with 4-deoxy-alpha-D-galact-4-enuronosyl groups at their non-reducing ends.</text>
        <dbReference type="EC" id="4.2.2.2"/>
    </reaction>
</comment>
<comment type="cofactor">
    <cofactor evidence="1">
        <name>Ca(2+)</name>
        <dbReference type="ChEBI" id="CHEBI:29108"/>
    </cofactor>
    <text evidence="1">Binds 1 Ca(2+) ion per subunit.</text>
</comment>
<comment type="pathway">
    <text>Glycan metabolism; pectin degradation; 2-dehydro-3-deoxy-D-gluconate from pectin: step 2/5.</text>
</comment>
<comment type="subcellular location">
    <subcellularLocation>
        <location>Secreted</location>
    </subcellularLocation>
</comment>
<comment type="similarity">
    <text evidence="3">Belongs to the polysaccharide lyase 1 family. PLADES subfamily.</text>
</comment>
<dbReference type="EC" id="4.2.2.2"/>
<dbReference type="EMBL" id="M14510">
    <property type="protein sequence ID" value="AAA24847.1"/>
    <property type="molecule type" value="Genomic_DNA"/>
</dbReference>
<dbReference type="PIR" id="B25158">
    <property type="entry name" value="WZWCPB"/>
</dbReference>
<dbReference type="RefSeq" id="WP_039999247.1">
    <property type="nucleotide sequence ID" value="NZ_JBBBQI010000012.1"/>
</dbReference>
<dbReference type="SMR" id="P04959"/>
<dbReference type="CAZy" id="PL1">
    <property type="family name" value="Polysaccharide Lyase Family 1"/>
</dbReference>
<dbReference type="BRENDA" id="4.2.2.2">
    <property type="organism ID" value="2141"/>
</dbReference>
<dbReference type="UniPathway" id="UPA00545">
    <property type="reaction ID" value="UER00824"/>
</dbReference>
<dbReference type="GO" id="GO:0005576">
    <property type="term" value="C:extracellular region"/>
    <property type="evidence" value="ECO:0007669"/>
    <property type="project" value="UniProtKB-SubCell"/>
</dbReference>
<dbReference type="GO" id="GO:0046872">
    <property type="term" value="F:metal ion binding"/>
    <property type="evidence" value="ECO:0007669"/>
    <property type="project" value="UniProtKB-KW"/>
</dbReference>
<dbReference type="GO" id="GO:0030570">
    <property type="term" value="F:pectate lyase activity"/>
    <property type="evidence" value="ECO:0007669"/>
    <property type="project" value="UniProtKB-EC"/>
</dbReference>
<dbReference type="GO" id="GO:0045490">
    <property type="term" value="P:pectin catabolic process"/>
    <property type="evidence" value="ECO:0007669"/>
    <property type="project" value="UniProtKB-UniPathway"/>
</dbReference>
<dbReference type="Gene3D" id="2.160.20.10">
    <property type="entry name" value="Single-stranded right-handed beta-helix, Pectin lyase-like"/>
    <property type="match status" value="1"/>
</dbReference>
<dbReference type="InterPro" id="IPR002022">
    <property type="entry name" value="Pec_lyase"/>
</dbReference>
<dbReference type="InterPro" id="IPR012334">
    <property type="entry name" value="Pectin_lyas_fold"/>
</dbReference>
<dbReference type="InterPro" id="IPR011050">
    <property type="entry name" value="Pectin_lyase_fold/virulence"/>
</dbReference>
<dbReference type="InterPro" id="IPR045032">
    <property type="entry name" value="PEL"/>
</dbReference>
<dbReference type="PANTHER" id="PTHR31683">
    <property type="entry name" value="PECTATE LYASE 18-RELATED"/>
    <property type="match status" value="1"/>
</dbReference>
<dbReference type="PANTHER" id="PTHR31683:SF18">
    <property type="entry name" value="PECTATE LYASE 21-RELATED"/>
    <property type="match status" value="1"/>
</dbReference>
<dbReference type="Pfam" id="PF00544">
    <property type="entry name" value="Pectate_lyase_4"/>
    <property type="match status" value="1"/>
</dbReference>
<dbReference type="SMART" id="SM00656">
    <property type="entry name" value="Amb_all"/>
    <property type="match status" value="1"/>
</dbReference>
<dbReference type="SUPFAM" id="SSF51126">
    <property type="entry name" value="Pectin lyase-like"/>
    <property type="match status" value="1"/>
</dbReference>
<keyword id="KW-0106">Calcium</keyword>
<keyword id="KW-1015">Disulfide bond</keyword>
<keyword id="KW-0456">Lyase</keyword>
<keyword id="KW-0479">Metal-binding</keyword>
<keyword id="KW-0964">Secreted</keyword>
<keyword id="KW-0732">Signal</keyword>
<proteinExistence type="inferred from homology"/>
<sequence>MKSLITPIAAGLLLAFSQYSLAADTGGYTKTDGGDVSGAVKKTASSMQDIVNIIEAAKVDANGKKVKGGAYPLVITYTGNEDSLINAAAANICGQWSKDARGVEIKDFTKGLTIIGANGSSANFGIWIVNSSDIVVRNMRIGYLPGGAQDGDMFRIDNSPNVWLDHNELFAANHECDGTKDGDTTFESAIDIKKGATYVTISYNYIHGVKKVGLSGFSSSDTAERNITYHHNIYSDVNARLPLQRGGNVHAYNNLYTGITSSGLNVRQNGKALIENNWFENAVSPVTSRYDGSNFGTWVLKGNNITKPADFATYNITWTPDTKEYRNADTWTSTGTYPTVPYSYSPVSAQCVKDKLANYAGVGKNLATLASSACK</sequence>
<reference key="1">
    <citation type="journal article" date="1986" name="J. Bacteriol.">
        <title>Structure of two pectate lyase genes from Erwinia chrysanthemi EC16 and their high-level expression in Escherichia coli.</title>
        <authorList>
            <person name="Keen N.T."/>
            <person name="Tamaki S."/>
        </authorList>
    </citation>
    <scope>NUCLEOTIDE SEQUENCE [GENOMIC DNA]</scope>
    <source>
        <strain>EC16</strain>
    </source>
</reference>
<gene>
    <name type="primary">pelB</name>
</gene>
<feature type="signal peptide">
    <location>
        <begin position="1"/>
        <end position="22"/>
    </location>
</feature>
<feature type="chain" id="PRO_0000024853" description="Pectate lyase B">
    <location>
        <begin position="23"/>
        <end position="375"/>
    </location>
</feature>
<feature type="active site" evidence="2">
    <location>
        <position position="240"/>
    </location>
</feature>
<feature type="binding site" evidence="1">
    <location>
        <position position="150"/>
    </location>
    <ligand>
        <name>Ca(2+)</name>
        <dbReference type="ChEBI" id="CHEBI:29108"/>
    </ligand>
</feature>
<feature type="binding site" evidence="1">
    <location>
        <position position="152"/>
    </location>
    <ligand>
        <name>Ca(2+)</name>
        <dbReference type="ChEBI" id="CHEBI:29108"/>
    </ligand>
</feature>
<feature type="binding site" evidence="1">
    <location>
        <position position="187"/>
    </location>
    <ligand>
        <name>Ca(2+)</name>
        <dbReference type="ChEBI" id="CHEBI:29108"/>
    </ligand>
</feature>
<feature type="binding site" evidence="1">
    <location>
        <position position="191"/>
    </location>
    <ligand>
        <name>Ca(2+)</name>
        <dbReference type="ChEBI" id="CHEBI:29108"/>
    </ligand>
</feature>
<feature type="disulfide bond" evidence="1">
    <location>
        <begin position="93"/>
        <end position="176"/>
    </location>
</feature>
<feature type="disulfide bond" evidence="1">
    <location>
        <begin position="351"/>
        <end position="374"/>
    </location>
</feature>
<name>PLYB_DICCH</name>
<evidence type="ECO:0000250" key="1"/>
<evidence type="ECO:0000255" key="2"/>
<evidence type="ECO:0000305" key="3"/>